<feature type="chain" id="PRO_0000380597" description="Uncharacterized methyltransferase MAV_4945">
    <location>
        <begin position="1"/>
        <end position="253"/>
    </location>
</feature>
<proteinExistence type="inferred from homology"/>
<dbReference type="EC" id="2.1.1.-"/>
<dbReference type="EMBL" id="CP000479">
    <property type="protein sequence ID" value="ABK68574.1"/>
    <property type="molecule type" value="Genomic_DNA"/>
</dbReference>
<dbReference type="SMR" id="A0QMC8"/>
<dbReference type="KEGG" id="mav:MAV_4945"/>
<dbReference type="HOGENOM" id="CLU_073035_0_0_11"/>
<dbReference type="Proteomes" id="UP000001574">
    <property type="component" value="Chromosome"/>
</dbReference>
<dbReference type="GO" id="GO:0008757">
    <property type="term" value="F:S-adenosylmethionine-dependent methyltransferase activity"/>
    <property type="evidence" value="ECO:0007669"/>
    <property type="project" value="InterPro"/>
</dbReference>
<dbReference type="GO" id="GO:0032259">
    <property type="term" value="P:methylation"/>
    <property type="evidence" value="ECO:0007669"/>
    <property type="project" value="UniProtKB-KW"/>
</dbReference>
<dbReference type="CDD" id="cd02440">
    <property type="entry name" value="AdoMet_MTases"/>
    <property type="match status" value="1"/>
</dbReference>
<dbReference type="Gene3D" id="3.40.50.150">
    <property type="entry name" value="Vaccinia Virus protein VP39"/>
    <property type="match status" value="1"/>
</dbReference>
<dbReference type="InterPro" id="IPR013216">
    <property type="entry name" value="Methyltransf_11"/>
</dbReference>
<dbReference type="InterPro" id="IPR029063">
    <property type="entry name" value="SAM-dependent_MTases_sf"/>
</dbReference>
<dbReference type="PANTHER" id="PTHR43591:SF24">
    <property type="entry name" value="2-METHOXY-6-POLYPRENYL-1,4-BENZOQUINOL METHYLASE, MITOCHONDRIAL"/>
    <property type="match status" value="1"/>
</dbReference>
<dbReference type="PANTHER" id="PTHR43591">
    <property type="entry name" value="METHYLTRANSFERASE"/>
    <property type="match status" value="1"/>
</dbReference>
<dbReference type="Pfam" id="PF08241">
    <property type="entry name" value="Methyltransf_11"/>
    <property type="match status" value="1"/>
</dbReference>
<dbReference type="SUPFAM" id="SSF53335">
    <property type="entry name" value="S-adenosyl-L-methionine-dependent methyltransferases"/>
    <property type="match status" value="1"/>
</dbReference>
<organism>
    <name type="scientific">Mycobacterium avium (strain 104)</name>
    <dbReference type="NCBI Taxonomy" id="243243"/>
    <lineage>
        <taxon>Bacteria</taxon>
        <taxon>Bacillati</taxon>
        <taxon>Actinomycetota</taxon>
        <taxon>Actinomycetes</taxon>
        <taxon>Mycobacteriales</taxon>
        <taxon>Mycobacteriaceae</taxon>
        <taxon>Mycobacterium</taxon>
        <taxon>Mycobacterium avium complex (MAC)</taxon>
    </lineage>
</organism>
<keyword id="KW-0489">Methyltransferase</keyword>
<keyword id="KW-0808">Transferase</keyword>
<reference key="1">
    <citation type="submission" date="2006-10" db="EMBL/GenBank/DDBJ databases">
        <authorList>
            <person name="Fleischmann R.D."/>
            <person name="Dodson R.J."/>
            <person name="Haft D.H."/>
            <person name="Merkel J.S."/>
            <person name="Nelson W.C."/>
            <person name="Fraser C.M."/>
        </authorList>
    </citation>
    <scope>NUCLEOTIDE SEQUENCE [LARGE SCALE GENOMIC DNA]</scope>
    <source>
        <strain>104</strain>
    </source>
</reference>
<name>Y4945_MYCA1</name>
<protein>
    <recommendedName>
        <fullName>Uncharacterized methyltransferase MAV_4945</fullName>
        <ecNumber>2.1.1.-</ecNumber>
    </recommendedName>
</protein>
<comment type="similarity">
    <text evidence="1">Belongs to the methyltransferase superfamily.</text>
</comment>
<evidence type="ECO:0000305" key="1"/>
<sequence>MTDIFARRATLARSVRLLSQFRYERSEPARFYGALAADTAAMVDDLWRAGHGESAAGRTLLDVGGGPGYFAAAFADAGVRYLGVEPDPGEMHAAGPVVAADTGTFVRASGMALPFADDSVDICLSSNVAEHVPRPWQLGAEMLRVTRPGGLAVLSYTVWLGPFGGHEMGLTHYLGGSRAAARYARKHGHPAKNNYGSSLFEVSVADGLAWAACTGAELAAFPRYHPRWAWWLTSVPVLREFLVSNLVLVLQPQ</sequence>
<accession>A0QMC8</accession>
<gene>
    <name type="ordered locus">MAV_4945</name>
</gene>